<proteinExistence type="evidence at protein level"/>
<gene>
    <name type="primary">PTGS1</name>
    <name type="synonym">COX1</name>
</gene>
<feature type="signal peptide" evidence="4">
    <location>
        <begin position="1"/>
        <end position="27"/>
    </location>
</feature>
<feature type="chain" id="PRO_0000429170" description="Prostaglandin G/H synthase 1">
    <location>
        <begin position="28"/>
        <end position="603"/>
    </location>
</feature>
<feature type="domain" description="EGF-like" evidence="5">
    <location>
        <begin position="35"/>
        <end position="73"/>
    </location>
</feature>
<feature type="active site" description="Proton acceptor" evidence="6">
    <location>
        <position position="210"/>
    </location>
</feature>
<feature type="active site" description="For cyclooxygenase activity" evidence="1">
    <location>
        <position position="388"/>
    </location>
</feature>
<feature type="binding site" description="axial binding residue" evidence="6">
    <location>
        <position position="391"/>
    </location>
    <ligand>
        <name>heme b</name>
        <dbReference type="ChEBI" id="CHEBI:60344"/>
    </ligand>
    <ligandPart>
        <name>Fe</name>
        <dbReference type="ChEBI" id="CHEBI:18248"/>
    </ligandPart>
</feature>
<feature type="site" description="Aspirin-acetylated serine" evidence="1">
    <location>
        <position position="533"/>
    </location>
</feature>
<feature type="glycosylation site" description="N-linked (GlcNAc...) asparagine" evidence="4">
    <location>
        <position position="71"/>
    </location>
</feature>
<feature type="glycosylation site" description="N-linked (GlcNAc...) asparagine" evidence="4">
    <location>
        <position position="107"/>
    </location>
</feature>
<feature type="glycosylation site" description="N-linked (GlcNAc...) asparagine" evidence="4">
    <location>
        <position position="147"/>
    </location>
</feature>
<feature type="disulfide bond" evidence="1">
    <location>
        <begin position="39"/>
        <end position="50"/>
    </location>
</feature>
<feature type="disulfide bond" evidence="1">
    <location>
        <begin position="40"/>
        <end position="162"/>
    </location>
</feature>
<feature type="disulfide bond" evidence="1">
    <location>
        <begin position="44"/>
        <end position="60"/>
    </location>
</feature>
<feature type="disulfide bond" evidence="1">
    <location>
        <begin position="62"/>
        <end position="72"/>
    </location>
</feature>
<feature type="disulfide bond" evidence="1">
    <location>
        <begin position="572"/>
        <end position="578"/>
    </location>
</feature>
<feature type="splice variant" id="VSP_054856" description="In isoform 2 and isoform 3." evidence="8">
    <original>R</original>
    <variation>REFDPEAPRNPLRLPGEPRMPGPALTSRSAG</variation>
    <location>
        <position position="3"/>
    </location>
</feature>
<feature type="splice variant" id="VSP_054857" description="In isoform 3 and isoform 4." evidence="8">
    <location>
        <begin position="122"/>
        <end position="340"/>
    </location>
</feature>
<feature type="sequence conflict" description="In Ref. 1; AAN33049/AAN38739." evidence="9" ref="1">
    <original>E</original>
    <variation>Q</variation>
    <location>
        <position position="597"/>
    </location>
</feature>
<keyword id="KW-0025">Alternative splicing</keyword>
<keyword id="KW-0223">Dioxygenase</keyword>
<keyword id="KW-1015">Disulfide bond</keyword>
<keyword id="KW-0245">EGF-like domain</keyword>
<keyword id="KW-0256">Endoplasmic reticulum</keyword>
<keyword id="KW-0275">Fatty acid biosynthesis</keyword>
<keyword id="KW-0276">Fatty acid metabolism</keyword>
<keyword id="KW-0325">Glycoprotein</keyword>
<keyword id="KW-0349">Heme</keyword>
<keyword id="KW-0408">Iron</keyword>
<keyword id="KW-0444">Lipid biosynthesis</keyword>
<keyword id="KW-0443">Lipid metabolism</keyword>
<keyword id="KW-0472">Membrane</keyword>
<keyword id="KW-0479">Metal-binding</keyword>
<keyword id="KW-0492">Microsome</keyword>
<keyword id="KW-0560">Oxidoreductase</keyword>
<keyword id="KW-0575">Peroxidase</keyword>
<keyword id="KW-0643">Prostaglandin biosynthesis</keyword>
<keyword id="KW-0644">Prostaglandin metabolism</keyword>
<keyword id="KW-1185">Reference proteome</keyword>
<keyword id="KW-0732">Signal</keyword>
<accession>Q8HZR1</accession>
<accession>F1PBX3</accession>
<accession>Q8HZR0</accession>
<comment type="function">
    <text evidence="2">Dual cyclooxygenase and peroxidase that plays an important role in the biosynthesis pathway of prostanoids, a class of C20 oxylipins mainly derived from arachidonate ((5Z,8Z,11Z,14Z)-eicosatetraenoate, AA, C20:4(n-6)), with a particular role in the inflammatory response. The cyclooxygenase activity oxygenates AA to the hydroperoxy endoperoxide prostaglandin G2 (PGG2), and the peroxidase activity reduces PGG2 to the hydroxy endoperoxide prostaglandin H2 (PGH2), the precursor of all 2-series prostaglandins and thromboxanes. This complex transformation is initiated by abstraction of hydrogen at carbon 13 (with S-stereochemistry), followed by insertion of molecular O2 to form the endoperoxide bridge between carbon 9 and 11 that defines prostaglandins. The insertion of a second molecule of O2 (bis-oxygenase activity) yields a hydroperoxy group in PGG2 that is then reduced to PGH2 by two electrons. Involved in the constitutive production of prostanoids in particular in the stomach and platelets. In gastric epithelial cells, it is a key step in the generation of prostaglandins, such as prostaglandin E2 (PGE2), which plays an important role in cytoprotection. In platelets, it is involved in the generation of thromboxane A2 (TXA2), which promotes platelet activation and aggregation, vasoconstriction and proliferation of vascular smooth muscle cells. Can also use linoleate (LA, (9Z,12Z)-octadecadienoate, C18:2(n-6)) as substrate and produce hydroxyoctadecadienoates (HODEs) in a regio- and stereospecific manner, being (9R)-HODE ((9R)-hydroxy-(10E,12Z)-octadecadienoate) and (13S)-HODE ((13S)-hydroxy-(9Z,11E)-octadecadienoate) its major products.</text>
</comment>
<comment type="catalytic activity">
    <reaction evidence="3">
        <text>(5Z,8Z,11Z,14Z)-eicosatetraenoate + AH2 + 2 O2 = prostaglandin H2 + A + H2O</text>
        <dbReference type="Rhea" id="RHEA:23728"/>
        <dbReference type="ChEBI" id="CHEBI:13193"/>
        <dbReference type="ChEBI" id="CHEBI:15377"/>
        <dbReference type="ChEBI" id="CHEBI:15379"/>
        <dbReference type="ChEBI" id="CHEBI:17499"/>
        <dbReference type="ChEBI" id="CHEBI:32395"/>
        <dbReference type="ChEBI" id="CHEBI:57405"/>
        <dbReference type="EC" id="1.14.99.1"/>
    </reaction>
    <physiologicalReaction direction="left-to-right" evidence="3">
        <dbReference type="Rhea" id="RHEA:23729"/>
    </physiologicalReaction>
</comment>
<comment type="catalytic activity">
    <reaction evidence="3">
        <text>(5Z,8Z,11Z,14Z)-eicosatetraenoate + 2 O2 = prostaglandin G2</text>
        <dbReference type="Rhea" id="RHEA:42596"/>
        <dbReference type="ChEBI" id="CHEBI:15379"/>
        <dbReference type="ChEBI" id="CHEBI:32395"/>
        <dbReference type="ChEBI" id="CHEBI:82629"/>
    </reaction>
    <physiologicalReaction direction="left-to-right" evidence="3">
        <dbReference type="Rhea" id="RHEA:42597"/>
    </physiologicalReaction>
</comment>
<comment type="catalytic activity">
    <reaction evidence="3">
        <text>prostaglandin G2 + AH2 = prostaglandin H2 + A + H2O</text>
        <dbReference type="Rhea" id="RHEA:42600"/>
        <dbReference type="ChEBI" id="CHEBI:13193"/>
        <dbReference type="ChEBI" id="CHEBI:15377"/>
        <dbReference type="ChEBI" id="CHEBI:17499"/>
        <dbReference type="ChEBI" id="CHEBI:57405"/>
        <dbReference type="ChEBI" id="CHEBI:82629"/>
    </reaction>
    <physiologicalReaction direction="left-to-right" evidence="3">
        <dbReference type="Rhea" id="RHEA:42601"/>
    </physiologicalReaction>
</comment>
<comment type="catalytic activity">
    <reaction evidence="2">
        <text>(9Z,12Z)-octadecadienoate + AH2 + O2 = (9R)-hydroxy-(10E,12Z)-octadecadienoate + A + H2O</text>
        <dbReference type="Rhea" id="RHEA:75447"/>
        <dbReference type="ChEBI" id="CHEBI:13193"/>
        <dbReference type="ChEBI" id="CHEBI:15377"/>
        <dbReference type="ChEBI" id="CHEBI:15379"/>
        <dbReference type="ChEBI" id="CHEBI:17499"/>
        <dbReference type="ChEBI" id="CHEBI:30245"/>
        <dbReference type="ChEBI" id="CHEBI:77895"/>
    </reaction>
    <physiologicalReaction direction="left-to-right" evidence="2">
        <dbReference type="Rhea" id="RHEA:75448"/>
    </physiologicalReaction>
</comment>
<comment type="catalytic activity">
    <reaction evidence="2">
        <text>(9Z,12Z)-octadecadienoate + AH2 + O2 = (9S)-hydroxy-(10E,12Z)-octadecadienoate + A + H2O</text>
        <dbReference type="Rhea" id="RHEA:75459"/>
        <dbReference type="ChEBI" id="CHEBI:13193"/>
        <dbReference type="ChEBI" id="CHEBI:15377"/>
        <dbReference type="ChEBI" id="CHEBI:15379"/>
        <dbReference type="ChEBI" id="CHEBI:17499"/>
        <dbReference type="ChEBI" id="CHEBI:30245"/>
        <dbReference type="ChEBI" id="CHEBI:77852"/>
    </reaction>
    <physiologicalReaction direction="left-to-right" evidence="2">
        <dbReference type="Rhea" id="RHEA:75460"/>
    </physiologicalReaction>
</comment>
<comment type="catalytic activity">
    <reaction evidence="2">
        <text>(9Z,12Z)-octadecadienoate + AH2 + O2 = (13S)-hydroxy-(9Z,11E)-octadecadienoate + A + H2O</text>
        <dbReference type="Rhea" id="RHEA:75451"/>
        <dbReference type="ChEBI" id="CHEBI:13193"/>
        <dbReference type="ChEBI" id="CHEBI:15377"/>
        <dbReference type="ChEBI" id="CHEBI:15379"/>
        <dbReference type="ChEBI" id="CHEBI:17499"/>
        <dbReference type="ChEBI" id="CHEBI:30245"/>
        <dbReference type="ChEBI" id="CHEBI:90850"/>
    </reaction>
    <physiologicalReaction direction="left-to-right" evidence="2">
        <dbReference type="Rhea" id="RHEA:75452"/>
    </physiologicalReaction>
</comment>
<comment type="catalytic activity">
    <reaction evidence="2">
        <text>(9Z,12Z)-octadecadienoate + AH2 + O2 = (13R)-hydroxy-(9Z,11E)-octadecadienoate + A + H2O</text>
        <dbReference type="Rhea" id="RHEA:75455"/>
        <dbReference type="ChEBI" id="CHEBI:13193"/>
        <dbReference type="ChEBI" id="CHEBI:15377"/>
        <dbReference type="ChEBI" id="CHEBI:15379"/>
        <dbReference type="ChEBI" id="CHEBI:17499"/>
        <dbReference type="ChEBI" id="CHEBI:30245"/>
        <dbReference type="ChEBI" id="CHEBI:136655"/>
    </reaction>
    <physiologicalReaction direction="left-to-right" evidence="2">
        <dbReference type="Rhea" id="RHEA:75456"/>
    </physiologicalReaction>
</comment>
<comment type="cofactor">
    <cofactor evidence="1">
        <name>heme b</name>
        <dbReference type="ChEBI" id="CHEBI:60344"/>
    </cofactor>
    <text evidence="1">Binds 1 heme b (iron(II)-protoporphyrin IX) group per subunit.</text>
</comment>
<comment type="activity regulation">
    <text evidence="3">The cyclooxygenase activity is inhibited by nonsteroidal anti-inflammatory drugs (NSAIDs) including ibuprofen, flurbiprofen, ketoprofen, naproxen, flurbiprofen, anirolac, fenclofenac and diclofenac.</text>
</comment>
<comment type="pathway">
    <text evidence="3">Lipid metabolism; prostaglandin biosynthesis.</text>
</comment>
<comment type="subunit">
    <text evidence="1">Homodimer.</text>
</comment>
<comment type="subcellular location">
    <subcellularLocation>
        <location evidence="1">Microsome membrane</location>
        <topology evidence="7">Peripheral membrane protein</topology>
    </subcellularLocation>
    <subcellularLocation>
        <location evidence="7">Endoplasmic reticulum membrane</location>
        <topology evidence="7">Peripheral membrane protein</topology>
    </subcellularLocation>
</comment>
<comment type="alternative products">
    <event type="alternative splicing"/>
    <isoform>
        <id>Q8HZR1-1</id>
        <name>1</name>
        <name>COX-1</name>
        <sequence type="displayed"/>
    </isoform>
    <isoform>
        <id>Q8HZR1-2</id>
        <name>2</name>
        <name>COX-3</name>
        <sequence type="described" ref="VSP_054856"/>
    </isoform>
    <isoform>
        <id>Q8HZR1-3</id>
        <name>3</name>
        <name>PCOX-1a</name>
        <sequence type="described" ref="VSP_054856 VSP_054857"/>
    </isoform>
    <isoform>
        <id>Q8HZR1-4</id>
        <name>4</name>
        <name>PCOX-1b</name>
        <sequence type="described" ref="VSP_054857"/>
    </isoform>
    <text>Additional isoforms seem to exist.</text>
</comment>
<comment type="tissue specificity">
    <text>Brain cortex. Isoform 2 is expressed in the cerebral cortex and heart.</text>
</comment>
<comment type="PTM">
    <text evidence="7">N-glycosylated. N-linked glycosylation is necessary for enzymatic activity.</text>
</comment>
<comment type="miscellaneous">
    <text>The conversion of arachidonate to prostaglandin H2 is a 2 step reaction: a cyclooxygenase (COX) reaction which converts arachidonate to prostaglandin G2 (PGG2) and a peroxidase reaction in which PGG2 is reduced to prostaglandin H2 (PGH2). The cyclooxygenase reaction occurs in a hydrophobic channel in the core of the enzyme. The peroxidase reaction occurs at a heme-containing active site located near the protein surface. The nonsteroidal anti-inflammatory drugs (NSAIDs) binding site corresponds to the cyclooxygenase active site.</text>
</comment>
<comment type="miscellaneous">
    <text>Conversion of arachidonate to prostaglandin H2 is mediated by 2 different isozymes: the constitutive PTGS1 and the inducible PTGS2. PTGS1 is expressed constitutively and generally produces prostanoids acutely in response to hormonal stimuli to fine-tune physiological processes requiring instantaneous, continuous regulation (e.g. hemostasis). PTGS2 is inducible and typically produces prostanoids that mediate responses to physiological stresses such as infection and inflammation.</text>
</comment>
<comment type="miscellaneous">
    <text>PTGS1 and PTGS2 are the targets of nonsteroidal anti-inflammatory drugs (NSAIDs) including aspirin and ibuprofen. Aspirin is able to produce an irreversible inactivation of the enzyme through a serine acetylation. Inhibition of the PGHSs with NSAIDs acutely reduces inflammation, pain, and fever, and long-term use of these drugs reduces fatal thrombotic events, as well as the development of colon cancer and Alzheimer's disease. PTGS2 is the principal isozyme responsible for production of inflammatory prostaglandins. New generation PTGSs inhibitors strive to be selective for PTGS2, to avoid side effects such as gastrointestinal complications and ulceration.</text>
</comment>
<comment type="miscellaneous">
    <molecule>Isoform 3</molecule>
    <text evidence="9">No enzymatic activity. Membrane-bound.</text>
</comment>
<comment type="similarity">
    <text evidence="9">Belongs to the prostaglandin G/H synthase family.</text>
</comment>
<protein>
    <recommendedName>
        <fullName>Prostaglandin G/H synthase 1</fullName>
        <ecNumber evidence="3">1.14.99.1</ecNumber>
    </recommendedName>
    <alternativeName>
        <fullName>Cyclooxygenase-1</fullName>
        <shortName>COX-1</shortName>
    </alternativeName>
    <alternativeName>
        <fullName>Prostaglandin H2 synthase 1</fullName>
        <shortName>PGH synthase 1</shortName>
        <shortName>PGHS-1</shortName>
        <shortName>PHS 1</shortName>
    </alternativeName>
    <alternativeName>
        <fullName>Prostaglandin-endoperoxide synthase 1</fullName>
    </alternativeName>
</protein>
<evidence type="ECO:0000250" key="1"/>
<evidence type="ECO:0000250" key="2">
    <source>
        <dbReference type="UniProtKB" id="P05979"/>
    </source>
</evidence>
<evidence type="ECO:0000250" key="3">
    <source>
        <dbReference type="UniProtKB" id="P23219"/>
    </source>
</evidence>
<evidence type="ECO:0000255" key="4"/>
<evidence type="ECO:0000255" key="5">
    <source>
        <dbReference type="PROSITE-ProRule" id="PRU00076"/>
    </source>
</evidence>
<evidence type="ECO:0000255" key="6">
    <source>
        <dbReference type="PROSITE-ProRule" id="PRU00298"/>
    </source>
</evidence>
<evidence type="ECO:0000269" key="7">
    <source>
    </source>
</evidence>
<evidence type="ECO:0000303" key="8">
    <source>
    </source>
</evidence>
<evidence type="ECO:0000305" key="9"/>
<name>PGH1_CANLF</name>
<reference key="1">
    <citation type="journal article" date="2002" name="Proc. Natl. Acad. Sci. U.S.A.">
        <title>COX-3, a cyclooxygenase-1 variant inhibited by acetaminophen and other analgesic/antipyretic drugs: cloning, structure, and expression.</title>
        <authorList>
            <person name="Chandrasekharan N.V."/>
            <person name="Dai H."/>
            <person name="Roos K.L."/>
            <person name="Evanson N.K."/>
            <person name="Tomsik J."/>
            <person name="Elton T.S."/>
            <person name="Simmons D.L."/>
        </authorList>
    </citation>
    <scope>NUCLEOTIDE SEQUENCE [MRNA] (ISOFORMS 2 AND 3)</scope>
    <scope>ALTERNATIVE SPLICING</scope>
    <scope>GLYCOSYLATION</scope>
    <scope>SUBCELLULAR LOCATION</scope>
    <source>
        <tissue>Brain cortex</tissue>
    </source>
</reference>
<reference key="2">
    <citation type="journal article" date="2005" name="Nature">
        <title>Genome sequence, comparative analysis and haplotype structure of the domestic dog.</title>
        <authorList>
            <person name="Lindblad-Toh K."/>
            <person name="Wade C.M."/>
            <person name="Mikkelsen T.S."/>
            <person name="Karlsson E.K."/>
            <person name="Jaffe D.B."/>
            <person name="Kamal M."/>
            <person name="Clamp M."/>
            <person name="Chang J.L."/>
            <person name="Kulbokas E.J. III"/>
            <person name="Zody M.C."/>
            <person name="Mauceli E."/>
            <person name="Xie X."/>
            <person name="Breen M."/>
            <person name="Wayne R.K."/>
            <person name="Ostrander E.A."/>
            <person name="Ponting C.P."/>
            <person name="Galibert F."/>
            <person name="Smith D.R."/>
            <person name="deJong P.J."/>
            <person name="Kirkness E.F."/>
            <person name="Alvarez P."/>
            <person name="Biagi T."/>
            <person name="Brockman W."/>
            <person name="Butler J."/>
            <person name="Chin C.-W."/>
            <person name="Cook A."/>
            <person name="Cuff J."/>
            <person name="Daly M.J."/>
            <person name="DeCaprio D."/>
            <person name="Gnerre S."/>
            <person name="Grabherr M."/>
            <person name="Kellis M."/>
            <person name="Kleber M."/>
            <person name="Bardeleben C."/>
            <person name="Goodstadt L."/>
            <person name="Heger A."/>
            <person name="Hitte C."/>
            <person name="Kim L."/>
            <person name="Koepfli K.-P."/>
            <person name="Parker H.G."/>
            <person name="Pollinger J.P."/>
            <person name="Searle S.M.J."/>
            <person name="Sutter N.B."/>
            <person name="Thomas R."/>
            <person name="Webber C."/>
            <person name="Baldwin J."/>
            <person name="Abebe A."/>
            <person name="Abouelleil A."/>
            <person name="Aftuck L."/>
            <person name="Ait-Zahra M."/>
            <person name="Aldredge T."/>
            <person name="Allen N."/>
            <person name="An P."/>
            <person name="Anderson S."/>
            <person name="Antoine C."/>
            <person name="Arachchi H."/>
            <person name="Aslam A."/>
            <person name="Ayotte L."/>
            <person name="Bachantsang P."/>
            <person name="Barry A."/>
            <person name="Bayul T."/>
            <person name="Benamara M."/>
            <person name="Berlin A."/>
            <person name="Bessette D."/>
            <person name="Blitshteyn B."/>
            <person name="Bloom T."/>
            <person name="Blye J."/>
            <person name="Boguslavskiy L."/>
            <person name="Bonnet C."/>
            <person name="Boukhgalter B."/>
            <person name="Brown A."/>
            <person name="Cahill P."/>
            <person name="Calixte N."/>
            <person name="Camarata J."/>
            <person name="Cheshatsang Y."/>
            <person name="Chu J."/>
            <person name="Citroen M."/>
            <person name="Collymore A."/>
            <person name="Cooke P."/>
            <person name="Dawoe T."/>
            <person name="Daza R."/>
            <person name="Decktor K."/>
            <person name="DeGray S."/>
            <person name="Dhargay N."/>
            <person name="Dooley K."/>
            <person name="Dooley K."/>
            <person name="Dorje P."/>
            <person name="Dorjee K."/>
            <person name="Dorris L."/>
            <person name="Duffey N."/>
            <person name="Dupes A."/>
            <person name="Egbiremolen O."/>
            <person name="Elong R."/>
            <person name="Falk J."/>
            <person name="Farina A."/>
            <person name="Faro S."/>
            <person name="Ferguson D."/>
            <person name="Ferreira P."/>
            <person name="Fisher S."/>
            <person name="FitzGerald M."/>
            <person name="Foley K."/>
            <person name="Foley C."/>
            <person name="Franke A."/>
            <person name="Friedrich D."/>
            <person name="Gage D."/>
            <person name="Garber M."/>
            <person name="Gearin G."/>
            <person name="Giannoukos G."/>
            <person name="Goode T."/>
            <person name="Goyette A."/>
            <person name="Graham J."/>
            <person name="Grandbois E."/>
            <person name="Gyaltsen K."/>
            <person name="Hafez N."/>
            <person name="Hagopian D."/>
            <person name="Hagos B."/>
            <person name="Hall J."/>
            <person name="Healy C."/>
            <person name="Hegarty R."/>
            <person name="Honan T."/>
            <person name="Horn A."/>
            <person name="Houde N."/>
            <person name="Hughes L."/>
            <person name="Hunnicutt L."/>
            <person name="Husby M."/>
            <person name="Jester B."/>
            <person name="Jones C."/>
            <person name="Kamat A."/>
            <person name="Kanga B."/>
            <person name="Kells C."/>
            <person name="Khazanovich D."/>
            <person name="Kieu A.C."/>
            <person name="Kisner P."/>
            <person name="Kumar M."/>
            <person name="Lance K."/>
            <person name="Landers T."/>
            <person name="Lara M."/>
            <person name="Lee W."/>
            <person name="Leger J.-P."/>
            <person name="Lennon N."/>
            <person name="Leuper L."/>
            <person name="LeVine S."/>
            <person name="Liu J."/>
            <person name="Liu X."/>
            <person name="Lokyitsang Y."/>
            <person name="Lokyitsang T."/>
            <person name="Lui A."/>
            <person name="Macdonald J."/>
            <person name="Major J."/>
            <person name="Marabella R."/>
            <person name="Maru K."/>
            <person name="Matthews C."/>
            <person name="McDonough S."/>
            <person name="Mehta T."/>
            <person name="Meldrim J."/>
            <person name="Melnikov A."/>
            <person name="Meneus L."/>
            <person name="Mihalev A."/>
            <person name="Mihova T."/>
            <person name="Miller K."/>
            <person name="Mittelman R."/>
            <person name="Mlenga V."/>
            <person name="Mulrain L."/>
            <person name="Munson G."/>
            <person name="Navidi A."/>
            <person name="Naylor J."/>
            <person name="Nguyen T."/>
            <person name="Nguyen N."/>
            <person name="Nguyen C."/>
            <person name="Nguyen T."/>
            <person name="Nicol R."/>
            <person name="Norbu N."/>
            <person name="Norbu C."/>
            <person name="Novod N."/>
            <person name="Nyima T."/>
            <person name="Olandt P."/>
            <person name="O'Neill B."/>
            <person name="O'Neill K."/>
            <person name="Osman S."/>
            <person name="Oyono L."/>
            <person name="Patti C."/>
            <person name="Perrin D."/>
            <person name="Phunkhang P."/>
            <person name="Pierre F."/>
            <person name="Priest M."/>
            <person name="Rachupka A."/>
            <person name="Raghuraman S."/>
            <person name="Rameau R."/>
            <person name="Ray V."/>
            <person name="Raymond C."/>
            <person name="Rege F."/>
            <person name="Rise C."/>
            <person name="Rogers J."/>
            <person name="Rogov P."/>
            <person name="Sahalie J."/>
            <person name="Settipalli S."/>
            <person name="Sharpe T."/>
            <person name="Shea T."/>
            <person name="Sheehan M."/>
            <person name="Sherpa N."/>
            <person name="Shi J."/>
            <person name="Shih D."/>
            <person name="Sloan J."/>
            <person name="Smith C."/>
            <person name="Sparrow T."/>
            <person name="Stalker J."/>
            <person name="Stange-Thomann N."/>
            <person name="Stavropoulos S."/>
            <person name="Stone C."/>
            <person name="Stone S."/>
            <person name="Sykes S."/>
            <person name="Tchuinga P."/>
            <person name="Tenzing P."/>
            <person name="Tesfaye S."/>
            <person name="Thoulutsang D."/>
            <person name="Thoulutsang Y."/>
            <person name="Topham K."/>
            <person name="Topping I."/>
            <person name="Tsamla T."/>
            <person name="Vassiliev H."/>
            <person name="Venkataraman V."/>
            <person name="Vo A."/>
            <person name="Wangchuk T."/>
            <person name="Wangdi T."/>
            <person name="Weiand M."/>
            <person name="Wilkinson J."/>
            <person name="Wilson A."/>
            <person name="Yadav S."/>
            <person name="Yang S."/>
            <person name="Yang X."/>
            <person name="Young G."/>
            <person name="Yu Q."/>
            <person name="Zainoun J."/>
            <person name="Zembek L."/>
            <person name="Zimmer A."/>
            <person name="Lander E.S."/>
        </authorList>
    </citation>
    <scope>NUCLEOTIDE SEQUENCE [LARGE SCALE GENOMIC DNA]</scope>
    <source>
        <strain>Boxer</strain>
    </source>
</reference>
<sequence>MSRGSRLHRWPLLLLLLLLLPPPPVLPAEARTPAPVNPCCYYPCQHQGICVRFGLDRYQCDCTRTGYSGPNCTIPELWTWLRNSLRPSPSFLHFLLTHGRWFWEFINATFIRDMLMRLVLTARSNLIPSPPTYNIAHDYISWESFSNVSYYTRVLPSVPQDCPTPMGTKGKKQLPDAQLLGRRFLLRRKFIPDPQGTNLMFAFFAQHFTHQFFKTSGKMGPGFTKALGHGVDLGHIYGDNLDRQYQLRLFKDGKLKYQVLDGEMYPPSVEEAPVLMHYPRGILPQSQMAVGQEVFGLLPGLMLYATLWLREHNRVCDLLKAEHPTWGDEQLFQTARLILIGETIKIVIEEYVQQLSGYFLQLKFDPELLFSAQFQYRNRIAMEFNQLYHWHPLMPDSFWVGSQEYSYEQFLFNTSMLTHYGIEALVDAFSRQSAGRIGGGRNIDHHVLHVAVETIKESRELRLQPFNEYRKRFGMRPYMSFQELTGEKEMAAELEELYGDIDALEFYPGLLLEKCHPNSIFGESMIEIGAPFSLKGLLGNPICSPEYWKPSTFGGEMGFNMVKTATLKKLVCLNTKTCPYVSFRVPDPHQDGGPGVERPSTEL</sequence>
<organism>
    <name type="scientific">Canis lupus familiaris</name>
    <name type="common">Dog</name>
    <name type="synonym">Canis familiaris</name>
    <dbReference type="NCBI Taxonomy" id="9615"/>
    <lineage>
        <taxon>Eukaryota</taxon>
        <taxon>Metazoa</taxon>
        <taxon>Chordata</taxon>
        <taxon>Craniata</taxon>
        <taxon>Vertebrata</taxon>
        <taxon>Euteleostomi</taxon>
        <taxon>Mammalia</taxon>
        <taxon>Eutheria</taxon>
        <taxon>Laurasiatheria</taxon>
        <taxon>Carnivora</taxon>
        <taxon>Caniformia</taxon>
        <taxon>Canidae</taxon>
        <taxon>Canis</taxon>
    </lineage>
</organism>
<dbReference type="EC" id="1.14.99.1" evidence="3"/>
<dbReference type="EMBL" id="AF535138">
    <property type="protein sequence ID" value="AAN33049.1"/>
    <property type="molecule type" value="mRNA"/>
</dbReference>
<dbReference type="EMBL" id="AF535139">
    <property type="protein sequence ID" value="AAN38739.1"/>
    <property type="molecule type" value="mRNA"/>
</dbReference>
<dbReference type="EMBL" id="AAEX03006907">
    <property type="status" value="NOT_ANNOTATED_CDS"/>
    <property type="molecule type" value="Genomic_DNA"/>
</dbReference>
<dbReference type="RefSeq" id="NP_001003023.1">
    <property type="nucleotide sequence ID" value="NM_001003023.2"/>
</dbReference>
<dbReference type="SMR" id="Q8HZR1"/>
<dbReference type="FunCoup" id="Q8HZR1">
    <property type="interactions" value="12"/>
</dbReference>
<dbReference type="STRING" id="9615.ENSCAFP00000044458"/>
<dbReference type="BindingDB" id="Q8HZR1"/>
<dbReference type="ChEMBL" id="CHEMBL4133"/>
<dbReference type="DrugCentral" id="Q8HZR1"/>
<dbReference type="PeroxiBase" id="3362">
    <property type="entry name" value="CfaPGHS01"/>
</dbReference>
<dbReference type="GlyCosmos" id="Q8HZR1">
    <property type="glycosylation" value="3 sites, No reported glycans"/>
</dbReference>
<dbReference type="SwissPalm" id="Q8HZR1"/>
<dbReference type="PaxDb" id="9612-ENSCAFP00000030067"/>
<dbReference type="Ensembl" id="ENSCAFT00000032279.4">
    <molecule id="Q8HZR1-3"/>
    <property type="protein sequence ID" value="ENSCAFP00000030061.2"/>
    <property type="gene ID" value="ENSCAFG00000020263.6"/>
</dbReference>
<dbReference type="Ensembl" id="ENSCAFT00000032287.6">
    <molecule id="Q8HZR1-1"/>
    <property type="protein sequence ID" value="ENSCAFP00000030067.3"/>
    <property type="gene ID" value="ENSCAFG00000020263.6"/>
</dbReference>
<dbReference type="Ensembl" id="ENSCAFT00000062685.2">
    <molecule id="Q8HZR1-2"/>
    <property type="protein sequence ID" value="ENSCAFP00000052626.1"/>
    <property type="gene ID" value="ENSCAFG00000020263.6"/>
</dbReference>
<dbReference type="Ensembl" id="ENSCAFT00040004500.1">
    <molecule id="Q8HZR1-2"/>
    <property type="protein sequence ID" value="ENSCAFP00040003864.1"/>
    <property type="gene ID" value="ENSCAFG00040002347.1"/>
</dbReference>
<dbReference type="Ensembl" id="ENSCAFT00040004521.1">
    <molecule id="Q8HZR1-1"/>
    <property type="protein sequence ID" value="ENSCAFP00040003882.1"/>
    <property type="gene ID" value="ENSCAFG00040002347.1"/>
</dbReference>
<dbReference type="Ensembl" id="ENSCAFT00040004622.1">
    <molecule id="Q8HZR1-3"/>
    <property type="protein sequence ID" value="ENSCAFP00040003972.1"/>
    <property type="gene ID" value="ENSCAFG00040002347.1"/>
</dbReference>
<dbReference type="Ensembl" id="ENSCAFT00845024089.1">
    <molecule id="Q8HZR1-1"/>
    <property type="protein sequence ID" value="ENSCAFP00845018920.1"/>
    <property type="gene ID" value="ENSCAFG00845013501.1"/>
</dbReference>
<dbReference type="GeneID" id="403544"/>
<dbReference type="KEGG" id="cfa:403544"/>
<dbReference type="CTD" id="5742"/>
<dbReference type="VEuPathDB" id="HostDB:ENSCAFG00845013501"/>
<dbReference type="eggNOG" id="KOG2408">
    <property type="taxonomic scope" value="Eukaryota"/>
</dbReference>
<dbReference type="GeneTree" id="ENSGT00390000010743"/>
<dbReference type="HOGENOM" id="CLU_022428_0_0_1"/>
<dbReference type="InParanoid" id="Q8HZR1"/>
<dbReference type="OMA" id="LFGSQFQ"/>
<dbReference type="OrthoDB" id="823504at2759"/>
<dbReference type="TreeFam" id="TF329675"/>
<dbReference type="Reactome" id="R-CFA-140180">
    <property type="pathway name" value="COX reactions"/>
</dbReference>
<dbReference type="Reactome" id="R-CFA-2162123">
    <property type="pathway name" value="Synthesis of Prostaglandins (PG) and Thromboxanes (TX)"/>
</dbReference>
<dbReference type="UniPathway" id="UPA00662"/>
<dbReference type="Proteomes" id="UP000002254">
    <property type="component" value="Chromosome 9"/>
</dbReference>
<dbReference type="Proteomes" id="UP000694429">
    <property type="component" value="Unplaced"/>
</dbReference>
<dbReference type="Proteomes" id="UP000694542">
    <property type="component" value="Chromosome 9"/>
</dbReference>
<dbReference type="Proteomes" id="UP000805418">
    <property type="component" value="Chromosome 9"/>
</dbReference>
<dbReference type="Bgee" id="ENSCAFG00000020263">
    <property type="expression patterns" value="Expressed in spinal cord and 49 other cell types or tissues"/>
</dbReference>
<dbReference type="GO" id="GO:0005737">
    <property type="term" value="C:cytoplasm"/>
    <property type="evidence" value="ECO:0000318"/>
    <property type="project" value="GO_Central"/>
</dbReference>
<dbReference type="GO" id="GO:0005789">
    <property type="term" value="C:endoplasmic reticulum membrane"/>
    <property type="evidence" value="ECO:0007669"/>
    <property type="project" value="UniProtKB-SubCell"/>
</dbReference>
<dbReference type="GO" id="GO:0043005">
    <property type="term" value="C:neuron projection"/>
    <property type="evidence" value="ECO:0000318"/>
    <property type="project" value="GO_Central"/>
</dbReference>
<dbReference type="GO" id="GO:0020037">
    <property type="term" value="F:heme binding"/>
    <property type="evidence" value="ECO:0007669"/>
    <property type="project" value="InterPro"/>
</dbReference>
<dbReference type="GO" id="GO:0046872">
    <property type="term" value="F:metal ion binding"/>
    <property type="evidence" value="ECO:0007669"/>
    <property type="project" value="UniProtKB-KW"/>
</dbReference>
<dbReference type="GO" id="GO:0016702">
    <property type="term" value="F:oxidoreductase activity, acting on single donors with incorporation of molecular oxygen, incorporation of two atoms of oxygen"/>
    <property type="evidence" value="ECO:0000318"/>
    <property type="project" value="GO_Central"/>
</dbReference>
<dbReference type="GO" id="GO:0004601">
    <property type="term" value="F:peroxidase activity"/>
    <property type="evidence" value="ECO:0007669"/>
    <property type="project" value="UniProtKB-KW"/>
</dbReference>
<dbReference type="GO" id="GO:0004666">
    <property type="term" value="F:prostaglandin-endoperoxide synthase activity"/>
    <property type="evidence" value="ECO:0000318"/>
    <property type="project" value="GO_Central"/>
</dbReference>
<dbReference type="GO" id="GO:0019371">
    <property type="term" value="P:cyclooxygenase pathway"/>
    <property type="evidence" value="ECO:0000318"/>
    <property type="project" value="GO_Central"/>
</dbReference>
<dbReference type="GO" id="GO:0006979">
    <property type="term" value="P:response to oxidative stress"/>
    <property type="evidence" value="ECO:0007669"/>
    <property type="project" value="InterPro"/>
</dbReference>
<dbReference type="CDD" id="cd00054">
    <property type="entry name" value="EGF_CA"/>
    <property type="match status" value="1"/>
</dbReference>
<dbReference type="CDD" id="cd09816">
    <property type="entry name" value="prostaglandin_endoperoxide_synthase"/>
    <property type="match status" value="1"/>
</dbReference>
<dbReference type="FunFam" id="1.10.640.10:FF:000002">
    <property type="entry name" value="Prostaglandin G/H synthase 2"/>
    <property type="match status" value="1"/>
</dbReference>
<dbReference type="FunFam" id="2.10.25.10:FF:000235">
    <property type="entry name" value="Prostaglandin G/H synthase 2"/>
    <property type="match status" value="1"/>
</dbReference>
<dbReference type="Gene3D" id="1.10.640.10">
    <property type="entry name" value="Haem peroxidase domain superfamily, animal type"/>
    <property type="match status" value="1"/>
</dbReference>
<dbReference type="Gene3D" id="2.10.25.10">
    <property type="entry name" value="Laminin"/>
    <property type="match status" value="1"/>
</dbReference>
<dbReference type="InterPro" id="IPR000742">
    <property type="entry name" value="EGF-like_dom"/>
</dbReference>
<dbReference type="InterPro" id="IPR019791">
    <property type="entry name" value="Haem_peroxidase_animal"/>
</dbReference>
<dbReference type="InterPro" id="IPR010255">
    <property type="entry name" value="Haem_peroxidase_sf"/>
</dbReference>
<dbReference type="InterPro" id="IPR037120">
    <property type="entry name" value="Haem_peroxidase_sf_animal"/>
</dbReference>
<dbReference type="InterPro" id="IPR050783">
    <property type="entry name" value="Oxylipin_biosynth_metab"/>
</dbReference>
<dbReference type="PANTHER" id="PTHR11903">
    <property type="entry name" value="PROSTAGLANDIN G/H SYNTHASE"/>
    <property type="match status" value="1"/>
</dbReference>
<dbReference type="PANTHER" id="PTHR11903:SF6">
    <property type="entry name" value="PROSTAGLANDIN G_H SYNTHASE 1"/>
    <property type="match status" value="1"/>
</dbReference>
<dbReference type="Pfam" id="PF03098">
    <property type="entry name" value="An_peroxidase"/>
    <property type="match status" value="1"/>
</dbReference>
<dbReference type="PRINTS" id="PR00457">
    <property type="entry name" value="ANPEROXIDASE"/>
</dbReference>
<dbReference type="SUPFAM" id="SSF57196">
    <property type="entry name" value="EGF/Laminin"/>
    <property type="match status" value="1"/>
</dbReference>
<dbReference type="SUPFAM" id="SSF48113">
    <property type="entry name" value="Heme-dependent peroxidases"/>
    <property type="match status" value="1"/>
</dbReference>
<dbReference type="PROSITE" id="PS50026">
    <property type="entry name" value="EGF_3"/>
    <property type="match status" value="1"/>
</dbReference>
<dbReference type="PROSITE" id="PS50292">
    <property type="entry name" value="PEROXIDASE_3"/>
    <property type="match status" value="1"/>
</dbReference>